<gene>
    <name evidence="1" type="primary">guaC</name>
    <name type="ordered locus">SPG_1140</name>
</gene>
<keyword id="KW-0521">NADP</keyword>
<keyword id="KW-0560">Oxidoreductase</keyword>
<protein>
    <recommendedName>
        <fullName evidence="1">GMP reductase</fullName>
        <ecNumber evidence="1">1.7.1.7</ecNumber>
    </recommendedName>
    <alternativeName>
        <fullName evidence="1">Guanosine 5'-monophosphate oxidoreductase</fullName>
        <shortName evidence="1">Guanosine monophosphate reductase</shortName>
    </alternativeName>
</protein>
<sequence>MLNEFPIFDYEDIQLIPNKCVIKSRAEADTSVTLGNHTFKLPVVPANMQTILDENVAEQLAKGGYFYIMHRFDEAGRIPFIKRMHDQGLIASISVGVKDYEYDFVSQLKADAPEYITIDIAHGHADSVISMIQHIKKELPDTFVIAGNVGTPEAVRELENAGADATKVGIGPGKVCITKVKTGFGTGGWQLAAXRWCAKAARKPIIADGGIRTHGDIAKSIRFGASMIMIGSLFAGHIESPGKTIEVDGEQFKEYYGSASQYQKGAYKNVEGKRILLPAKGHLQDTLTEMEQDLQSAISYAGGRQVADLKHVDYVIVKNSIWNGDASH</sequence>
<accession>B5E4Y3</accession>
<feature type="chain" id="PRO_1000146141" description="GMP reductase">
    <location>
        <begin position="1"/>
        <end position="328"/>
    </location>
</feature>
<feature type="active site" description="Thioimidate intermediate" evidence="1">
    <location>
        <position position="176"/>
    </location>
</feature>
<feature type="binding site" evidence="1">
    <location>
        <begin position="205"/>
        <end position="228"/>
    </location>
    <ligand>
        <name>NADP(+)</name>
        <dbReference type="ChEBI" id="CHEBI:58349"/>
    </ligand>
</feature>
<evidence type="ECO:0000255" key="1">
    <source>
        <dbReference type="HAMAP-Rule" id="MF_01511"/>
    </source>
</evidence>
<reference key="1">
    <citation type="journal article" date="2001" name="Microb. Drug Resist.">
        <title>Annotated draft genomic sequence from a Streptococcus pneumoniae type 19F clinical isolate.</title>
        <authorList>
            <person name="Dopazo J."/>
            <person name="Mendoza A."/>
            <person name="Herrero J."/>
            <person name="Caldara F."/>
            <person name="Humbert Y."/>
            <person name="Friedli L."/>
            <person name="Guerrier M."/>
            <person name="Grand-Schenk E."/>
            <person name="Gandin C."/>
            <person name="de Francesco M."/>
            <person name="Polissi A."/>
            <person name="Buell G."/>
            <person name="Feger G."/>
            <person name="Garcia E."/>
            <person name="Peitsch M."/>
            <person name="Garcia-Bustos J.F."/>
        </authorList>
    </citation>
    <scope>NUCLEOTIDE SEQUENCE [LARGE SCALE GENOMIC DNA]</scope>
    <source>
        <strain>G54</strain>
    </source>
</reference>
<reference key="2">
    <citation type="submission" date="2008-03" db="EMBL/GenBank/DDBJ databases">
        <title>Pneumococcal beta glucoside metabolism investigated by whole genome comparison.</title>
        <authorList>
            <person name="Mulas L."/>
            <person name="Trappetti C."/>
            <person name="Hakenbeck R."/>
            <person name="Iannelli F."/>
            <person name="Pozzi G."/>
            <person name="Davidsen T.M."/>
            <person name="Tettelin H."/>
            <person name="Oggioni M."/>
        </authorList>
    </citation>
    <scope>NUCLEOTIDE SEQUENCE [LARGE SCALE GENOMIC DNA]</scope>
    <source>
        <strain>G54</strain>
    </source>
</reference>
<dbReference type="EC" id="1.7.1.7" evidence="1"/>
<dbReference type="EMBL" id="CP001015">
    <property type="protein sequence ID" value="ACF56688.1"/>
    <property type="molecule type" value="Genomic_DNA"/>
</dbReference>
<dbReference type="KEGG" id="spx:SPG_1140"/>
<dbReference type="HOGENOM" id="CLU_022552_5_0_9"/>
<dbReference type="GO" id="GO:0005829">
    <property type="term" value="C:cytosol"/>
    <property type="evidence" value="ECO:0007669"/>
    <property type="project" value="TreeGrafter"/>
</dbReference>
<dbReference type="GO" id="GO:1902560">
    <property type="term" value="C:GMP reductase complex"/>
    <property type="evidence" value="ECO:0007669"/>
    <property type="project" value="InterPro"/>
</dbReference>
<dbReference type="GO" id="GO:0003920">
    <property type="term" value="F:GMP reductase activity"/>
    <property type="evidence" value="ECO:0007669"/>
    <property type="project" value="UniProtKB-UniRule"/>
</dbReference>
<dbReference type="GO" id="GO:0006163">
    <property type="term" value="P:purine nucleotide metabolic process"/>
    <property type="evidence" value="ECO:0007669"/>
    <property type="project" value="UniProtKB-UniRule"/>
</dbReference>
<dbReference type="CDD" id="cd00381">
    <property type="entry name" value="IMPDH"/>
    <property type="match status" value="1"/>
</dbReference>
<dbReference type="FunFam" id="3.20.20.70:FF:000079">
    <property type="entry name" value="GMP reductase"/>
    <property type="match status" value="1"/>
</dbReference>
<dbReference type="Gene3D" id="3.20.20.70">
    <property type="entry name" value="Aldolase class I"/>
    <property type="match status" value="1"/>
</dbReference>
<dbReference type="HAMAP" id="MF_01511">
    <property type="entry name" value="GMP_reduct_type2"/>
    <property type="match status" value="1"/>
</dbReference>
<dbReference type="InterPro" id="IPR013785">
    <property type="entry name" value="Aldolase_TIM"/>
</dbReference>
<dbReference type="InterPro" id="IPR050139">
    <property type="entry name" value="GMP_reductase"/>
</dbReference>
<dbReference type="InterPro" id="IPR005994">
    <property type="entry name" value="GuaC_type_2"/>
</dbReference>
<dbReference type="InterPro" id="IPR015875">
    <property type="entry name" value="IMP_DH/GMP_Rdtase_CS"/>
</dbReference>
<dbReference type="InterPro" id="IPR001093">
    <property type="entry name" value="IMP_DH_GMPRt"/>
</dbReference>
<dbReference type="NCBIfam" id="TIGR01306">
    <property type="entry name" value="GMP_reduct_2"/>
    <property type="match status" value="1"/>
</dbReference>
<dbReference type="NCBIfam" id="NF003966">
    <property type="entry name" value="PRK05458.1"/>
    <property type="match status" value="1"/>
</dbReference>
<dbReference type="PANTHER" id="PTHR43170">
    <property type="entry name" value="GMP REDUCTASE"/>
    <property type="match status" value="1"/>
</dbReference>
<dbReference type="PANTHER" id="PTHR43170:SF5">
    <property type="entry name" value="GMP REDUCTASE"/>
    <property type="match status" value="1"/>
</dbReference>
<dbReference type="Pfam" id="PF00478">
    <property type="entry name" value="IMPDH"/>
    <property type="match status" value="1"/>
</dbReference>
<dbReference type="PIRSF" id="PIRSF036500">
    <property type="entry name" value="GMP_red_Firmic"/>
    <property type="match status" value="1"/>
</dbReference>
<dbReference type="SMART" id="SM01240">
    <property type="entry name" value="IMPDH"/>
    <property type="match status" value="1"/>
</dbReference>
<dbReference type="SUPFAM" id="SSF51412">
    <property type="entry name" value="Inosine monophosphate dehydrogenase (IMPDH)"/>
    <property type="match status" value="1"/>
</dbReference>
<dbReference type="PROSITE" id="PS00487">
    <property type="entry name" value="IMP_DH_GMP_RED"/>
    <property type="match status" value="1"/>
</dbReference>
<comment type="function">
    <text evidence="1">Catalyzes the irreversible NADPH-dependent deamination of GMP to IMP. It functions in the conversion of nucleobase, nucleoside and nucleotide derivatives of G to A nucleotides, and in maintaining the intracellular balance of A and G nucleotides.</text>
</comment>
<comment type="catalytic activity">
    <reaction evidence="1">
        <text>IMP + NH4(+) + NADP(+) = GMP + NADPH + 2 H(+)</text>
        <dbReference type="Rhea" id="RHEA:17185"/>
        <dbReference type="ChEBI" id="CHEBI:15378"/>
        <dbReference type="ChEBI" id="CHEBI:28938"/>
        <dbReference type="ChEBI" id="CHEBI:57783"/>
        <dbReference type="ChEBI" id="CHEBI:58053"/>
        <dbReference type="ChEBI" id="CHEBI:58115"/>
        <dbReference type="ChEBI" id="CHEBI:58349"/>
        <dbReference type="EC" id="1.7.1.7"/>
    </reaction>
</comment>
<comment type="similarity">
    <text evidence="1">Belongs to the IMPDH/GMPR family. GuaC type 2 subfamily.</text>
</comment>
<proteinExistence type="inferred from homology"/>
<organism>
    <name type="scientific">Streptococcus pneumoniae serotype 19F (strain G54)</name>
    <dbReference type="NCBI Taxonomy" id="512566"/>
    <lineage>
        <taxon>Bacteria</taxon>
        <taxon>Bacillati</taxon>
        <taxon>Bacillota</taxon>
        <taxon>Bacilli</taxon>
        <taxon>Lactobacillales</taxon>
        <taxon>Streptococcaceae</taxon>
        <taxon>Streptococcus</taxon>
    </lineage>
</organism>
<name>GUAC_STRP4</name>